<comment type="function">
    <text evidence="6 9 11">Component of the methyl-coenzyme M reductase (MCR) I that catalyzes the reductive cleavage of methyl-coenzyme M (CoM-S-CH3 or 2-(methylthio)ethanesulfonate) using coenzyme B (CoB or 7-mercaptoheptanoylthreonine phosphate) as reductant which results in the production of methane and the mixed heterodisulfide of CoB and CoM (CoM-S-S-CoB). This is the final step in methanogenesis (PubMed:2269306, PubMed:27140643, PubMed:3350018). Neither N-6-mercaptohexanoylthreonine phosphate (H-S-HxoTP) nor N-8-mercaptooctanoylthreonine phosphate (H-SOcoTP) nor any other thiol compound such as CoA or CoM can substitute for CoB as the electron donor (PubMed:3350018).</text>
</comment>
<comment type="catalytic activity">
    <reaction evidence="6 8 9 11">
        <text>coenzyme B + methyl-coenzyme M = methane + coenzyme M-coenzyme B heterodisulfide</text>
        <dbReference type="Rhea" id="RHEA:12532"/>
        <dbReference type="ChEBI" id="CHEBI:16183"/>
        <dbReference type="ChEBI" id="CHEBI:58286"/>
        <dbReference type="ChEBI" id="CHEBI:58411"/>
        <dbReference type="ChEBI" id="CHEBI:58596"/>
        <dbReference type="EC" id="2.8.4.1"/>
    </reaction>
    <physiologicalReaction direction="left-to-right" evidence="9 16">
        <dbReference type="Rhea" id="RHEA:12533"/>
    </physiologicalReaction>
</comment>
<comment type="cofactor">
    <cofactor evidence="11 12 13">
        <name>coenzyme F430</name>
        <dbReference type="ChEBI" id="CHEBI:60540"/>
    </cofactor>
    <text evidence="11 12 13">Binds 2 coenzyme F430 non-covalently per MCR complex. Coenzyme F430 is a yellow nickel porphinoid (PubMed:3350018, PubMed:9367957). Methyl-coenzyme-M reductase is activated when the enzyme-bound coenzyme F430 is reduced to the Ni(I) oxidation state (PubMed:9030728).</text>
</comment>
<comment type="activity regulation">
    <text evidence="9 11">Methyl-coenzyme M reductase activity is inhibited by 3-nitrooxypropanol (3-NOP) in vitro and in vivo, by oxidation of its active site Ni(I), which stops both growth and methanogenesis (PubMed:27140643). Is also inhibited by the reaction product CoM-S-S-CoB (PubMed:3350018).</text>
</comment>
<comment type="biophysicochemical properties">
    <kinetics>
        <KM evidence="6 11">75 uM for coenzyme B</KM>
        <KM evidence="6 11">4 mM for methyl-coenzyme M</KM>
        <KM evidence="8">169 uM for coenzyme B (at 25 degrees Celsius, under conditions in which the heterodisulfide product is recycled via reduction by hydroxocobalamin)</KM>
        <KM evidence="8">42 uM for coenzyme B (at 25 degrees Celsius, under conditions in which the heterodisulfide product is not recycled)</KM>
        <Vmax evidence="11">40.0 nmol/min/mg enzyme</Vmax>
        <Vmax evidence="8">7.8 umol/min/mg enzyme (at 25 degrees Celsius, under conditions in which the heterodisulfide product is recycled via reduction by hydroxocobalamin)</Vmax>
        <Vmax evidence="8">0.41 umol/min/mg enzyme (at 25 degrees Celsius, under conditions in which the heterodisulfide product is not recycled)</Vmax>
        <text evidence="8">kcat is 18 sec(-1) (at 25 degrees Celsius, under conditions in which the heterodisulfide product is recycled via reduction by hydroxocobalamin). kcat is 0.96 sec(-1) (at 25 degrees Celsius, under conditions in which the heterodisulfide product is not recycled).</text>
    </kinetics>
</comment>
<comment type="pathway">
    <text evidence="9 11">One-carbon metabolism; methyl-coenzyme M reduction; methane from methyl-coenzyme M: step 1/1.</text>
</comment>
<comment type="subunit">
    <text evidence="6 11 13">MCR is a hexamer of two alpha, two beta, and two gamma chains, forming a dimer of heterotrimers.</text>
</comment>
<comment type="subcellular location">
    <subcellularLocation>
        <location evidence="7">Cytoplasm</location>
    </subcellularLocation>
    <text evidence="7">Under growth limiting conditions on nickel-depleted media, a fraction of 70% of the enzyme is localized close to the cytoplasmic membrane, which implies 'facultative' membrane association of the enzyme.</text>
</comment>
<comment type="developmental stage">
    <text evidence="6">There are two MCR complexes in this bacteria. MCR II is expressed in the early growth phase. Late growth cells contain mostly MCR I.</text>
</comment>
<comment type="PTM">
    <text evidence="1 2 3 4 5 10 13">The alpha subunit contains six modified amino acids near the active site region (PubMed:27467699). Is methylated on His-257, Arg-271, Gln-400 and Cys-452, probably by the action of specific S-adenosylmethionine-dependent methyltransferases. Also contains a thioglycine at position 445, forming a thiopeptide bond (PubMed:10660523, PubMed:11491299, PubMed:20707311, PubMed:21438550, PubMed:27467699, PubMed:9367957). Contains a didehydroaspartate residue at position 450 (PubMed:27467699). The methylation on C5 of Arg-271 is a post-translational methylation not essential in vivo, but which plays a role for the stability and structural integrity of MCR (By similarity).</text>
</comment>
<comment type="miscellaneous">
    <text evidence="8">The MCR reaction has been shown to follow an ordered bi-bi ternary complex mechanism, in which methyl-SCoM must enter the MCR active site prior to CoB for a productive catalysis.</text>
</comment>
<comment type="similarity">
    <text evidence="15">Belongs to the methyl-coenzyme M reductase alpha subunit family.</text>
</comment>
<evidence type="ECO:0000250" key="1">
    <source>
        <dbReference type="UniProtKB" id="Q8THH1"/>
    </source>
</evidence>
<evidence type="ECO:0000269" key="2">
    <source>
    </source>
</evidence>
<evidence type="ECO:0000269" key="3">
    <source>
    </source>
</evidence>
<evidence type="ECO:0000269" key="4">
    <source>
    </source>
</evidence>
<evidence type="ECO:0000269" key="5">
    <source>
    </source>
</evidence>
<evidence type="ECO:0000269" key="6">
    <source>
    </source>
</evidence>
<evidence type="ECO:0000269" key="7">
    <source>
    </source>
</evidence>
<evidence type="ECO:0000269" key="8">
    <source>
    </source>
</evidence>
<evidence type="ECO:0000269" key="9">
    <source>
    </source>
</evidence>
<evidence type="ECO:0000269" key="10">
    <source>
    </source>
</evidence>
<evidence type="ECO:0000269" key="11">
    <source>
    </source>
</evidence>
<evidence type="ECO:0000269" key="12">
    <source>
    </source>
</evidence>
<evidence type="ECO:0000269" key="13">
    <source>
    </source>
</evidence>
<evidence type="ECO:0000303" key="14">
    <source>
    </source>
</evidence>
<evidence type="ECO:0000305" key="15"/>
<evidence type="ECO:0000305" key="16">
    <source>
    </source>
</evidence>
<evidence type="ECO:0007744" key="17">
    <source>
        <dbReference type="PDB" id="1HBM"/>
    </source>
</evidence>
<evidence type="ECO:0007744" key="18">
    <source>
        <dbReference type="PDB" id="1HBN"/>
    </source>
</evidence>
<evidence type="ECO:0007744" key="19">
    <source>
        <dbReference type="PDB" id="1HBO"/>
    </source>
</evidence>
<evidence type="ECO:0007744" key="20">
    <source>
        <dbReference type="PDB" id="1HBU"/>
    </source>
</evidence>
<evidence type="ECO:0007744" key="21">
    <source>
        <dbReference type="PDB" id="1MRO"/>
    </source>
</evidence>
<evidence type="ECO:0007744" key="22">
    <source>
        <dbReference type="PDB" id="3M1V"/>
    </source>
</evidence>
<evidence type="ECO:0007744" key="23">
    <source>
        <dbReference type="PDB" id="3M2R"/>
    </source>
</evidence>
<evidence type="ECO:0007744" key="24">
    <source>
        <dbReference type="PDB" id="3M2U"/>
    </source>
</evidence>
<evidence type="ECO:0007744" key="25">
    <source>
        <dbReference type="PDB" id="3M2V"/>
    </source>
</evidence>
<evidence type="ECO:0007744" key="26">
    <source>
        <dbReference type="PDB" id="3M30"/>
    </source>
</evidence>
<evidence type="ECO:0007744" key="27">
    <source>
        <dbReference type="PDB" id="3M32"/>
    </source>
</evidence>
<evidence type="ECO:0007744" key="28">
    <source>
        <dbReference type="PDB" id="3POT"/>
    </source>
</evidence>
<evidence type="ECO:0007744" key="29">
    <source>
        <dbReference type="PDB" id="5A0Y"/>
    </source>
</evidence>
<evidence type="ECO:0007744" key="30">
    <source>
        <dbReference type="PDB" id="5G0R"/>
    </source>
</evidence>
<evidence type="ECO:0007829" key="31">
    <source>
        <dbReference type="PDB" id="5A0Y"/>
    </source>
</evidence>
<gene>
    <name type="primary">mcrA</name>
    <name type="ordered locus">MTBMA_c15480</name>
</gene>
<name>MCRA_METTM</name>
<sequence length="550" mass="60511">MADKLFINALKKKFEESPEEKKTTFYTLGGWKQSERKTEFVNAGKEVAAKRGIPQYNPDIGTPLGQRVLMPYQVSTTDTYVEGDDLHFVNNAAMQQMWDDIRRTVIVGLNHAHAVIEKRLGKEVTPETITHYLETVNHAMPGAAVVQEHMVETHPALVADSYVKVFTGNDEIADEIDPAFVIDINKQFPEDQAETLKAEVGDGIWQVVRIPTIVSRTCDGATTSRWSAMQIGMSMISAYKQAAGEAATGDFAYAAKHAEVIHMGTYLPVRRARGENEPGGVPFGYLADICQSSRVNYEDPVRVSLDVVATGAMLYDQIWLGSYMSGGVGFTQYATAAYTDNILDDFTYFGKEYVEDKYGLCEAPNNMDTVLDVATEVTFYGLEQYEEYPALLEDQFGGSQRAAVVAAAAGCSTAFATGNAQTGLSGWYLSMYLHKEQHSRLGFYGYDLQDQCGASNVFSIRGDEGLPLELRGPNYPNYAMNVGHQGEYAGISQAPHAARGDAFVFNPLVKIAFADDNLVFDFTNVRGEFAKGALREFEPAGERALITPAK</sequence>
<accession>P11558</accession>
<accession>D9PY29</accession>
<dbReference type="EC" id="2.8.4.1" evidence="6 8 9 11"/>
<dbReference type="EMBL" id="X07794">
    <property type="protein sequence ID" value="CAA30639.1"/>
    <property type="molecule type" value="Genomic_DNA"/>
</dbReference>
<dbReference type="EMBL" id="CP001710">
    <property type="protein sequence ID" value="ADL59127.1"/>
    <property type="molecule type" value="Genomic_DNA"/>
</dbReference>
<dbReference type="RefSeq" id="WP_013296337.1">
    <property type="nucleotide sequence ID" value="NC_014408.1"/>
</dbReference>
<dbReference type="PDB" id="1HBM">
    <property type="method" value="X-ray"/>
    <property type="resolution" value="1.80 A"/>
    <property type="chains" value="A/D=2-550"/>
</dbReference>
<dbReference type="PDB" id="1HBN">
    <property type="method" value="X-ray"/>
    <property type="resolution" value="1.16 A"/>
    <property type="chains" value="A/D=2-550"/>
</dbReference>
<dbReference type="PDB" id="1HBO">
    <property type="method" value="X-ray"/>
    <property type="resolution" value="1.78 A"/>
    <property type="chains" value="A/D=2-550"/>
</dbReference>
<dbReference type="PDB" id="1HBU">
    <property type="method" value="X-ray"/>
    <property type="resolution" value="1.90 A"/>
    <property type="chains" value="A/D=2-550"/>
</dbReference>
<dbReference type="PDB" id="1MRO">
    <property type="method" value="X-ray"/>
    <property type="resolution" value="1.16 A"/>
    <property type="chains" value="A/D=2-549"/>
</dbReference>
<dbReference type="PDB" id="3M1V">
    <property type="method" value="X-ray"/>
    <property type="resolution" value="1.45 A"/>
    <property type="chains" value="A/D=2-550"/>
</dbReference>
<dbReference type="PDB" id="3M2R">
    <property type="method" value="X-ray"/>
    <property type="resolution" value="1.30 A"/>
    <property type="chains" value="A/D=2-550"/>
</dbReference>
<dbReference type="PDB" id="3M2U">
    <property type="method" value="X-ray"/>
    <property type="resolution" value="1.40 A"/>
    <property type="chains" value="A/D=2-550"/>
</dbReference>
<dbReference type="PDB" id="3M2V">
    <property type="method" value="X-ray"/>
    <property type="resolution" value="1.80 A"/>
    <property type="chains" value="A/D=2-550"/>
</dbReference>
<dbReference type="PDB" id="3M30">
    <property type="method" value="X-ray"/>
    <property type="resolution" value="1.45 A"/>
    <property type="chains" value="A/D=2-550"/>
</dbReference>
<dbReference type="PDB" id="3M32">
    <property type="method" value="X-ray"/>
    <property type="resolution" value="1.35 A"/>
    <property type="chains" value="A/D=2-550"/>
</dbReference>
<dbReference type="PDB" id="3POT">
    <property type="method" value="X-ray"/>
    <property type="resolution" value="1.20 A"/>
    <property type="chains" value="A/D=1-550"/>
</dbReference>
<dbReference type="PDB" id="5A0Y">
    <property type="method" value="X-ray"/>
    <property type="resolution" value="1.10 A"/>
    <property type="chains" value="A/D=1-550"/>
</dbReference>
<dbReference type="PDB" id="5G0R">
    <property type="method" value="X-ray"/>
    <property type="resolution" value="1.25 A"/>
    <property type="chains" value="A/D=1-550"/>
</dbReference>
<dbReference type="PDB" id="7B2H">
    <property type="method" value="X-ray"/>
    <property type="resolution" value="2.12 A"/>
    <property type="chains" value="A/D=1-550"/>
</dbReference>
<dbReference type="PDB" id="7SUC">
    <property type="method" value="X-ray"/>
    <property type="resolution" value="1.90 A"/>
    <property type="chains" value="A/a=2-549"/>
</dbReference>
<dbReference type="PDB" id="7SXM">
    <property type="method" value="X-ray"/>
    <property type="resolution" value="2.50 A"/>
    <property type="chains" value="A/D=2-549"/>
</dbReference>
<dbReference type="PDBsum" id="1HBM"/>
<dbReference type="PDBsum" id="1HBN"/>
<dbReference type="PDBsum" id="1HBO"/>
<dbReference type="PDBsum" id="1HBU"/>
<dbReference type="PDBsum" id="1MRO"/>
<dbReference type="PDBsum" id="3M1V"/>
<dbReference type="PDBsum" id="3M2R"/>
<dbReference type="PDBsum" id="3M2U"/>
<dbReference type="PDBsum" id="3M2V"/>
<dbReference type="PDBsum" id="3M30"/>
<dbReference type="PDBsum" id="3M32"/>
<dbReference type="PDBsum" id="3POT"/>
<dbReference type="PDBsum" id="5A0Y"/>
<dbReference type="PDBsum" id="5G0R"/>
<dbReference type="PDBsum" id="7B2H"/>
<dbReference type="PDBsum" id="7SUC"/>
<dbReference type="PDBsum" id="7SXM"/>
<dbReference type="SMR" id="P11558"/>
<dbReference type="STRING" id="79929.MTBMA_c15480"/>
<dbReference type="iPTMnet" id="P11558"/>
<dbReference type="PaxDb" id="79929-MTBMA_c15480"/>
<dbReference type="GeneID" id="77400319"/>
<dbReference type="GeneID" id="9705257"/>
<dbReference type="KEGG" id="mmg:MTBMA_c15480"/>
<dbReference type="PATRIC" id="fig|79929.8.peg.1501"/>
<dbReference type="HOGENOM" id="CLU_493170_0_0_2"/>
<dbReference type="OrthoDB" id="52468at2157"/>
<dbReference type="BRENDA" id="2.8.4.1">
    <property type="organism ID" value="7427"/>
</dbReference>
<dbReference type="UniPathway" id="UPA00646">
    <property type="reaction ID" value="UER00699"/>
</dbReference>
<dbReference type="EvolutionaryTrace" id="P11558"/>
<dbReference type="Proteomes" id="UP000000345">
    <property type="component" value="Chromosome"/>
</dbReference>
<dbReference type="GO" id="GO:0005737">
    <property type="term" value="C:cytoplasm"/>
    <property type="evidence" value="ECO:0007669"/>
    <property type="project" value="UniProtKB-SubCell"/>
</dbReference>
<dbReference type="GO" id="GO:0050524">
    <property type="term" value="F:coenzyme-B sulfoethylthiotransferase activity"/>
    <property type="evidence" value="ECO:0000314"/>
    <property type="project" value="MENGO"/>
</dbReference>
<dbReference type="GO" id="GO:0046872">
    <property type="term" value="F:metal ion binding"/>
    <property type="evidence" value="ECO:0007669"/>
    <property type="project" value="UniProtKB-KW"/>
</dbReference>
<dbReference type="GO" id="GO:0015948">
    <property type="term" value="P:methanogenesis"/>
    <property type="evidence" value="ECO:0007669"/>
    <property type="project" value="UniProtKB-KW"/>
</dbReference>
<dbReference type="FunFam" id="3.30.70.470:FF:000001">
    <property type="entry name" value="Methyl-coenzyme M reductase I subunit alpha"/>
    <property type="match status" value="1"/>
</dbReference>
<dbReference type="FunFam" id="1.20.840.10:FF:000001">
    <property type="entry name" value="Methyl-coenzyme M reductase subunit alpha"/>
    <property type="match status" value="1"/>
</dbReference>
<dbReference type="Gene3D" id="3.30.70.470">
    <property type="match status" value="1"/>
</dbReference>
<dbReference type="Gene3D" id="1.20.840.10">
    <property type="entry name" value="Methyl-coenzyme M reductase, alpha/beta subunit, C-terminal"/>
    <property type="match status" value="1"/>
</dbReference>
<dbReference type="Gene3D" id="3.90.390.10">
    <property type="entry name" value="Methyl-coenzyme M Reductase, Chain A, domain 1"/>
    <property type="match status" value="1"/>
</dbReference>
<dbReference type="InterPro" id="IPR016212">
    <property type="entry name" value="Me_CoM_Rdtase_asu"/>
</dbReference>
<dbReference type="InterPro" id="IPR008924">
    <property type="entry name" value="Me_CoM_Rdtase_asu/bsu_C"/>
</dbReference>
<dbReference type="InterPro" id="IPR009047">
    <property type="entry name" value="Me_CoM_Rdtase_asu_C"/>
</dbReference>
<dbReference type="InterPro" id="IPR003183">
    <property type="entry name" value="Me_CoM_Rdtase_asu_N"/>
</dbReference>
<dbReference type="InterPro" id="IPR015811">
    <property type="entry name" value="Me_CoM_Rdtase_asu_N_sub1"/>
</dbReference>
<dbReference type="InterPro" id="IPR015823">
    <property type="entry name" value="Me_CoM_Rdtase_asu_N_sub2"/>
</dbReference>
<dbReference type="InterPro" id="IPR009024">
    <property type="entry name" value="Me_CoM_Rdtase_Fd-like_fold"/>
</dbReference>
<dbReference type="NCBIfam" id="TIGR03256">
    <property type="entry name" value="met_CoM_red_alp"/>
    <property type="match status" value="1"/>
</dbReference>
<dbReference type="Pfam" id="PF02249">
    <property type="entry name" value="MCR_alpha"/>
    <property type="match status" value="1"/>
</dbReference>
<dbReference type="Pfam" id="PF02745">
    <property type="entry name" value="MCR_alpha_N"/>
    <property type="match status" value="1"/>
</dbReference>
<dbReference type="PIRSF" id="PIRSF000262">
    <property type="entry name" value="MCR_alpha"/>
    <property type="match status" value="1"/>
</dbReference>
<dbReference type="SUPFAM" id="SSF48081">
    <property type="entry name" value="Methyl-coenzyme M reductase alpha and beta chain C-terminal domain"/>
    <property type="match status" value="1"/>
</dbReference>
<dbReference type="SUPFAM" id="SSF55088">
    <property type="entry name" value="Methyl-coenzyme M reductase subunits"/>
    <property type="match status" value="1"/>
</dbReference>
<reference key="1">
    <citation type="journal article" date="1988" name="J. Bacteriol.">
        <title>Cloning and characterization of the methyl coenzyme M reductase genes from Methanobacterium thermoautotrophicum.</title>
        <authorList>
            <person name="Bokranz M."/>
            <person name="Baeumner G."/>
            <person name="Allmansberger R."/>
            <person name="Ankel-Fuchs D."/>
            <person name="Klein A."/>
        </authorList>
    </citation>
    <scope>NUCLEOTIDE SEQUENCE [GENOMIC DNA]</scope>
    <source>
        <strain>ATCC BAA-927 / DSM 2133 / JCM 14651 / NBRC 100331 / OCM 82 / Marburg</strain>
    </source>
</reference>
<reference key="2">
    <citation type="journal article" date="2010" name="J. Bacteriol.">
        <title>Complete genome sequence of Methanothermobacter marburgensis, a methanoarchaeon model organism.</title>
        <authorList>
            <person name="Liesegang H."/>
            <person name="Kaster A.K."/>
            <person name="Wiezer A."/>
            <person name="Goenrich M."/>
            <person name="Wollherr A."/>
            <person name="Seedorf H."/>
            <person name="Gottschalk G."/>
            <person name="Thauer R.K."/>
        </authorList>
    </citation>
    <scope>NUCLEOTIDE SEQUENCE [LARGE SCALE GENOMIC DNA]</scope>
    <source>
        <strain>ATCC BAA-927 / DSM 2133 / JCM 14651 / NBRC 100331 / OCM 82 / Marburg</strain>
    </source>
</reference>
<reference key="3">
    <citation type="journal article" date="1990" name="Eur. J. Biochem.">
        <title>Two genetically distinct methyl-coenzyme M reductases in Methanobacterium thermoautotrophicum strain Marburg and delta H.</title>
        <authorList>
            <person name="Rospert S."/>
            <person name="Linder D."/>
            <person name="Ellermann J."/>
            <person name="Thauer R.K."/>
        </authorList>
    </citation>
    <scope>PROTEIN SEQUENCE OF 2-19</scope>
    <scope>FUNCTION</scope>
    <scope>CATALYTIC ACTIVITY</scope>
    <scope>BIOPHYSICOCHEMICAL PROPERTIES</scope>
    <scope>SUBUNIT</scope>
    <scope>DEVELOPMENTAL STAGE</scope>
    <source>
        <strain>ATCC BAA-927 / DSM 2133 / JCM 14651 / NBRC 100331 / OCM 82 / Marburg</strain>
    </source>
</reference>
<reference key="4">
    <citation type="journal article" date="1988" name="Eur. J. Biochem.">
        <title>The final step in methane formation. Investigations with highly purified methyl-CoM reductase (component C) from Methanobacterium thermoautotrophicum (strain Marburg).</title>
        <authorList>
            <person name="Ellermann J."/>
            <person name="Hedderich R."/>
            <person name="Boecher R."/>
            <person name="Thauer R.K."/>
        </authorList>
    </citation>
    <scope>FUNCTION</scope>
    <scope>CATALYTIC ACTIVITY</scope>
    <scope>BIOPHYSICOCHEMICAL PROPERTIES</scope>
    <scope>SUBSTRATE SPECIFICITY</scope>
    <scope>COFACTOR</scope>
    <scope>ACTIVITY REGULATION</scope>
    <scope>PATHWAY</scope>
    <scope>SUBUNIT</scope>
    <source>
        <strain>ATCC BAA-927 / DSM 2133 / JCM 14651 / NBRC 100331 / OCM 82 / Marburg</strain>
    </source>
</reference>
<reference key="5">
    <citation type="journal article" date="1997" name="Eur. J. Biochem.">
        <title>Purified methyl-coenzyme-M reductase is activated when the enzyme-bound coenzyme F430 is reduced to the nickel(I) oxidation state by titanium(III) citrate.</title>
        <authorList>
            <person name="Goubeaud M."/>
            <person name="Schreiner G."/>
            <person name="Thauer R.K."/>
        </authorList>
    </citation>
    <scope>COFACTOR</scope>
    <source>
        <strain>ATCC BAA-927 / DSM 2133 / JCM 14651 / NBRC 100331 / OCM 82 / Marburg</strain>
    </source>
</reference>
<reference key="6">
    <citation type="journal article" date="2000" name="J. Biol. Chem.">
        <title>The biosynthesis of methylated amino acids in the active site region of methyl-coenzyme M reductase.</title>
        <authorList>
            <person name="Selmer T."/>
            <person name="Kahnt J."/>
            <person name="Goubeaud M."/>
            <person name="Shima S."/>
            <person name="Grabarse W."/>
            <person name="Ermler U."/>
            <person name="Thauer R.K."/>
        </authorList>
    </citation>
    <scope>METHYLATION AT HIS-257; ARG-271; GLN-400 AND CYS-452</scope>
    <scope>THIOCARBOXYLATION AT GLY-445</scope>
    <source>
        <strain>ATCC BAA-927 / DSM 2133 / JCM 14651 / NBRC 100331 / OCM 82 / Marburg</strain>
    </source>
</reference>
<reference key="7">
    <citation type="journal article" date="2013" name="Archaea">
        <title>Localization of methyl-Coenzyme M reductase as metabolic marker for diverse methanogenic Archaea.</title>
        <authorList>
            <person name="Wrede C."/>
            <person name="Walbaum U."/>
            <person name="Ducki A."/>
            <person name="Heieren I."/>
            <person name="Hoppert M."/>
        </authorList>
    </citation>
    <scope>SUBCELLULAR LOCATION</scope>
    <source>
        <strain>ATCC BAA-927 / DSM 2133 / JCM 14651 / NBRC 100331 / OCM 82 / Marburg</strain>
    </source>
</reference>
<reference key="8">
    <citation type="journal article" date="2015" name="J. Biol. Chem.">
        <title>The reaction mechanism of methyl-coenzyme M reductase: how an enzyme enforces strict binding order.</title>
        <authorList>
            <person name="Wongnate T."/>
            <person name="Ragsdale S.W."/>
        </authorList>
    </citation>
    <scope>CATALYTIC ACTIVITY</scope>
    <scope>BIOPHYSICOCHEMICAL PROPERTIES</scope>
    <scope>REACTION MECHANISM</scope>
    <source>
        <strain>ATCC BAA-927 / DSM 2133 / JCM 14651 / NBRC 100331 / OCM 82 / Marburg</strain>
    </source>
</reference>
<reference evidence="21" key="9">
    <citation type="journal article" date="1997" name="Science">
        <title>Crystal structure of methyl-coenzyme M reductase: the key enzyme of biological methane formation.</title>
        <authorList>
            <person name="Ermler U."/>
            <person name="Grabarse W."/>
            <person name="Shima S."/>
            <person name="Goubeaud M."/>
            <person name="Thauer R.K."/>
        </authorList>
    </citation>
    <scope>X-RAY CRYSTALLOGRAPHY (1.16 ANGSTROMS) OF 2-549 IN COMPLEX WITH COENZYME F430; COENZYME B; COENZYME M AND MCR SUBUNITS BETA AND GAMMA</scope>
    <scope>METHYLATION AT HIS-257; ARG-271; GLN-400 AND CYS-452</scope>
    <scope>THIOCARBOXYLATION AT GLY-445</scope>
    <scope>COFACTOR</scope>
    <scope>SUBUNIT</scope>
    <source>
        <strain>ATCC BAA-927 / DSM 2133 / JCM 14651 / NBRC 100331 / OCM 82 / Marburg</strain>
    </source>
</reference>
<reference evidence="17 18 19 20" key="10">
    <citation type="journal article" date="2001" name="J. Mol. Biol.">
        <title>On the mechanism of biological methane formation: structural evidence for conformational changes in methyl-coenzyme M reductase upon substrate binding.</title>
        <authorList>
            <person name="Grabarse W."/>
            <person name="Mahlert F."/>
            <person name="Duin E.C."/>
            <person name="Goubeaud M."/>
            <person name="Shima S."/>
            <person name="Thauer R.K."/>
            <person name="Lamzin V."/>
            <person name="Ermler U."/>
        </authorList>
    </citation>
    <scope>X-RAY CRYSTALLOGRAPHY (1.16 ANGSTROMS) OF 2-550 IN COMPLEXES WITH COM-S-S-COB; COENZYME B; COENZYME F430; COENZYME M AND MCR SUBUNITS BETA AND GAMMA</scope>
    <scope>METHYLATION AT HIS-257; ARG-271; GLN-400 AND CYS-452</scope>
    <scope>THIOCARBOXYLATION AT GLY-445</scope>
    <source>
        <strain>ATCC BAA-927 / DSM 2133 / JCM 14651 / NBRC 100331 / OCM 82 / Marburg</strain>
    </source>
</reference>
<reference evidence="22 23 24 25 26 27" key="11">
    <citation type="journal article" date="2010" name="Biochemistry">
        <title>Structural insight into methyl-coenzyme M reductase chemistry using coenzyme B analogues.</title>
        <authorList>
            <person name="Cedervall P.E."/>
            <person name="Dey M."/>
            <person name="Pearson A.R."/>
            <person name="Ragsdale S.W."/>
            <person name="Wilmot C.M."/>
        </authorList>
    </citation>
    <scope>X-RAY CRYSTALLOGRAPHY (1.30 ANGSTROMS) OF 2-550 IN COMPLEXES WITH COM-S-S-COB; COENZYME B; COENZYME F430; COENZYME M; COENZYME B ANALOGS AND MCR SUBUNITS BETA AND GAMMA</scope>
    <scope>METHYLATION AT HIS-257; ARG-271; GLN-400 AND CYS-452</scope>
    <scope>THIOCARBOXYLATION AT GLY-445</scope>
    <source>
        <strain>ATCC BAA-927 / DSM 2133 / JCM 14651 / NBRC 100331 / OCM 82 / Marburg</strain>
    </source>
</reference>
<reference evidence="28" key="12">
    <citation type="journal article" date="2011" name="J. Am. Chem. Soc.">
        <title>Structural analysis of a Ni-methyl species in methyl-coenzyme M reductase from Methanothermobacter marburgensis.</title>
        <authorList>
            <person name="Cedervall P.E."/>
            <person name="Dey M."/>
            <person name="Li X."/>
            <person name="Sarangi R."/>
            <person name="Hedman B."/>
            <person name="Ragsdale S.W."/>
            <person name="Wilmot C.M."/>
        </authorList>
    </citation>
    <scope>X-RAY CRYSTALLOGRAPHY (1.20 ANGSTROMS) IN COMPLEX WITH COENZYME F430; COENZYME B; COENZYME M AND MCR SUBUNITS BETA AND GAMMA</scope>
    <scope>METHYLATION AT HIS-257; ARG-271; GLN-400 AND CYS-452</scope>
    <scope>THIOCARBOXYLATION AT GLY-445</scope>
    <source>
        <strain>ATCC BAA-927 / DSM 2133 / JCM 14651 / NBRC 100331 / OCM 82 / Marburg</strain>
    </source>
</reference>
<reference evidence="29" key="13">
    <citation type="journal article" date="2016" name="Angew. Chem. Int. Ed. Engl.">
        <title>Didehydroaspartate Modification in Methyl-CoenzymeM Reductase Catalyzing Methane Formation.</title>
        <authorList>
            <person name="Wagner T."/>
            <person name="Kahnt J."/>
            <person name="Ermler U."/>
            <person name="Shima S."/>
        </authorList>
    </citation>
    <scope>X-RAY CRYSTALLOGRAPHY (1.10 ANGSTROMS) IN COMPLEX WITH COENZYME F430; COENZYME B; COENZYME M AND MCR SUBUNITS BETA AND GAMMA</scope>
    <scope>METHYLATION AT HIS-257; ARG-271; GLN-400 AND CYS-452</scope>
    <scope>THIOCARBOXYLATION AT GLY-445</scope>
    <scope>DEHYDROGENATION AT ASP-450</scope>
    <source>
        <strain>ATCC BAA-927 / DSM 2133 / JCM 14651 / NBRC 100331 / OCM 82 / Marburg</strain>
    </source>
</reference>
<reference evidence="30" key="14">
    <citation type="journal article" date="2016" name="Proc. Natl. Acad. Sci. U.S.A.">
        <title>Mode of action uncovered for the specific reduction of methane emissions from ruminants by the small molecule 3-nitrooxypropanol.</title>
        <authorList>
            <person name="Duin E.C."/>
            <person name="Wagner T."/>
            <person name="Shima S."/>
            <person name="Prakash D."/>
            <person name="Cronin B."/>
            <person name="Yanez-Ruiz D.R."/>
            <person name="Duval S."/>
            <person name="Rumbeli R."/>
            <person name="Stemmler R.T."/>
            <person name="Thauer R.K."/>
            <person name="Kindermann M."/>
        </authorList>
    </citation>
    <scope>X-RAY CRYSTALLOGRAPHY (1.25 ANGSTROMS) IN COMPLEX WITH COENZYME B; COENZYME F430 AND MCR SUBUNITS BETA AND GAMMA</scope>
    <scope>FUNCTION</scope>
    <scope>CATALYTIC ACTIVITY</scope>
    <scope>ACTIVITY REGULATION</scope>
    <scope>PATHWAY</scope>
    <source>
        <strain>ATCC BAA-927 / DSM 2133 / JCM 14651 / NBRC 100331 / OCM 82 / Marburg</strain>
    </source>
</reference>
<protein>
    <recommendedName>
        <fullName evidence="14">Methyl-coenzyme M reductase I subunit alpha</fullName>
        <shortName evidence="14">MCR I alpha</shortName>
        <ecNumber evidence="6 8 9 11">2.8.4.1</ecNumber>
    </recommendedName>
    <alternativeName>
        <fullName>Coenzyme-B sulfoethylthiotransferase alpha</fullName>
    </alternativeName>
</protein>
<organism>
    <name type="scientific">Methanothermobacter marburgensis (strain ATCC BAA-927 / DSM 2133 / JCM 14651 / NBRC 100331 / OCM 82 / Marburg)</name>
    <name type="common">Methanobacterium thermoautotrophicum</name>
    <dbReference type="NCBI Taxonomy" id="79929"/>
    <lineage>
        <taxon>Archaea</taxon>
        <taxon>Methanobacteriati</taxon>
        <taxon>Methanobacteriota</taxon>
        <taxon>Methanomada group</taxon>
        <taxon>Methanobacteria</taxon>
        <taxon>Methanobacteriales</taxon>
        <taxon>Methanobacteriaceae</taxon>
        <taxon>Methanothermobacter</taxon>
    </lineage>
</organism>
<proteinExistence type="evidence at protein level"/>
<feature type="initiator methionine" description="Removed" evidence="6">
    <location>
        <position position="1"/>
    </location>
</feature>
<feature type="chain" id="PRO_0000147456" description="Methyl-coenzyme M reductase I subunit alpha">
    <location>
        <begin position="2"/>
        <end position="550"/>
    </location>
</feature>
<feature type="binding site" description="axial binding residue" evidence="3 4 5 9 10 13 18 21 22 28 29 30">
    <location>
        <position position="147"/>
    </location>
    <ligand>
        <name>coenzyme F430</name>
        <dbReference type="ChEBI" id="CHEBI:60540"/>
    </ligand>
    <ligandPart>
        <name>Ni</name>
        <dbReference type="ChEBI" id="CHEBI:28112"/>
    </ligandPart>
</feature>
<feature type="binding site" description="in chain A" evidence="3 4 5 9 10 13 18 21 22 28 29 30">
    <location>
        <position position="225"/>
    </location>
    <ligand>
        <name>coenzyme B</name>
        <dbReference type="ChEBI" id="CHEBI:58596"/>
        <note>ligand shared between two alpha subunits</note>
    </ligand>
</feature>
<feature type="binding site" description="in chain A" evidence="3 4 5 9 10 13 18 21 22 28 29 30">
    <location>
        <begin position="256"/>
        <end position="257"/>
    </location>
    <ligand>
        <name>coenzyme B</name>
        <dbReference type="ChEBI" id="CHEBI:58596"/>
        <note>ligand shared between two alpha subunits</note>
    </ligand>
</feature>
<feature type="binding site" description="in chain B" evidence="3 4 5 9 10 13 18 21 22 28 29 30">
    <location>
        <position position="270"/>
    </location>
    <ligand>
        <name>coenzyme B</name>
        <dbReference type="ChEBI" id="CHEBI:58596"/>
        <note>ligand shared between two alpha subunits</note>
    </ligand>
</feature>
<feature type="binding site" evidence="3 4 5 10 13 18 21 22 28 29">
    <location>
        <position position="333"/>
    </location>
    <ligand>
        <name>coenzyme M</name>
        <dbReference type="ChEBI" id="CHEBI:58319"/>
    </ligand>
</feature>
<feature type="binding site" evidence="3 4 5 10 13 18 21 22 28 29">
    <location>
        <position position="444"/>
    </location>
    <ligand>
        <name>coenzyme M</name>
        <dbReference type="ChEBI" id="CHEBI:58319"/>
    </ligand>
</feature>
<feature type="modified residue" description="Pros-methylhistidine" evidence="2 3 4 5 10 13">
    <location>
        <position position="257"/>
    </location>
</feature>
<feature type="modified residue" description="5-methylarginine" evidence="2 3 4 5 10 13">
    <location>
        <position position="271"/>
    </location>
</feature>
<feature type="modified residue" description="2-methylglutamine" evidence="2 3 4 5 10 13">
    <location>
        <position position="400"/>
    </location>
</feature>
<feature type="modified residue" description="1-thioglycine" evidence="2 3 4 5 10 13">
    <location>
        <position position="445"/>
    </location>
</feature>
<feature type="modified residue" description="(Z)-2,3-didehydroaspartate" evidence="10">
    <location>
        <position position="450"/>
    </location>
</feature>
<feature type="modified residue" description="S-methylcysteine" evidence="2 3 4 5 10 13">
    <location>
        <position position="452"/>
    </location>
</feature>
<feature type="helix" evidence="31">
    <location>
        <begin position="7"/>
        <end position="13"/>
    </location>
</feature>
<feature type="helix" evidence="31">
    <location>
        <begin position="30"/>
        <end position="33"/>
    </location>
</feature>
<feature type="helix" evidence="31">
    <location>
        <begin position="35"/>
        <end position="51"/>
    </location>
</feature>
<feature type="strand" evidence="31">
    <location>
        <begin position="60"/>
        <end position="62"/>
    </location>
</feature>
<feature type="strand" evidence="31">
    <location>
        <begin position="71"/>
        <end position="74"/>
    </location>
</feature>
<feature type="strand" evidence="31">
    <location>
        <begin position="80"/>
        <end position="82"/>
    </location>
</feature>
<feature type="helix" evidence="31">
    <location>
        <begin position="83"/>
        <end position="86"/>
    </location>
</feature>
<feature type="helix" evidence="31">
    <location>
        <begin position="88"/>
        <end position="90"/>
    </location>
</feature>
<feature type="helix" evidence="31">
    <location>
        <begin position="92"/>
        <end position="102"/>
    </location>
</feature>
<feature type="strand" evidence="31">
    <location>
        <begin position="104"/>
        <end position="109"/>
    </location>
</feature>
<feature type="helix" evidence="31">
    <location>
        <begin position="110"/>
        <end position="118"/>
    </location>
</feature>
<feature type="helix" evidence="31">
    <location>
        <begin position="126"/>
        <end position="139"/>
    </location>
</feature>
<feature type="turn" evidence="31">
    <location>
        <begin position="140"/>
        <end position="142"/>
    </location>
</feature>
<feature type="helix" evidence="31">
    <location>
        <begin position="155"/>
        <end position="158"/>
    </location>
</feature>
<feature type="strand" evidence="31">
    <location>
        <begin position="162"/>
        <end position="168"/>
    </location>
</feature>
<feature type="helix" evidence="31">
    <location>
        <begin position="170"/>
        <end position="175"/>
    </location>
</feature>
<feature type="helix" evidence="31">
    <location>
        <begin position="178"/>
        <end position="180"/>
    </location>
</feature>
<feature type="helix" evidence="31">
    <location>
        <begin position="184"/>
        <end position="187"/>
    </location>
</feature>
<feature type="helix" evidence="31">
    <location>
        <begin position="190"/>
        <end position="200"/>
    </location>
</feature>
<feature type="strand" evidence="31">
    <location>
        <begin position="204"/>
        <end position="209"/>
    </location>
</feature>
<feature type="helix" evidence="31">
    <location>
        <begin position="212"/>
        <end position="217"/>
    </location>
</feature>
<feature type="helix" evidence="31">
    <location>
        <begin position="222"/>
        <end position="238"/>
    </location>
</feature>
<feature type="helix" evidence="31">
    <location>
        <begin position="246"/>
        <end position="256"/>
    </location>
</feature>
<feature type="turn" evidence="31">
    <location>
        <begin position="257"/>
        <end position="259"/>
    </location>
</feature>
<feature type="helix" evidence="31">
    <location>
        <begin position="269"/>
        <end position="271"/>
    </location>
</feature>
<feature type="strand" evidence="31">
    <location>
        <begin position="275"/>
        <end position="277"/>
    </location>
</feature>
<feature type="helix" evidence="31">
    <location>
        <begin position="278"/>
        <end position="280"/>
    </location>
</feature>
<feature type="helix" evidence="31">
    <location>
        <begin position="283"/>
        <end position="289"/>
    </location>
</feature>
<feature type="helix" evidence="31">
    <location>
        <begin position="292"/>
        <end position="294"/>
    </location>
</feature>
<feature type="helix" evidence="31">
    <location>
        <begin position="300"/>
        <end position="316"/>
    </location>
</feature>
<feature type="helix" evidence="31">
    <location>
        <begin position="317"/>
        <end position="323"/>
    </location>
</feature>
<feature type="helix" evidence="31">
    <location>
        <begin position="331"/>
        <end position="335"/>
    </location>
</feature>
<feature type="turn" evidence="31">
    <location>
        <begin position="336"/>
        <end position="338"/>
    </location>
</feature>
<feature type="helix" evidence="31">
    <location>
        <begin position="342"/>
        <end position="357"/>
    </location>
</feature>
<feature type="helix" evidence="31">
    <location>
        <begin position="367"/>
        <end position="387"/>
    </location>
</feature>
<feature type="helix" evidence="31">
    <location>
        <begin position="389"/>
        <end position="394"/>
    </location>
</feature>
<feature type="helix" evidence="31">
    <location>
        <begin position="398"/>
        <end position="417"/>
    </location>
</feature>
<feature type="helix" evidence="31">
    <location>
        <begin position="420"/>
        <end position="438"/>
    </location>
</feature>
<feature type="helix" evidence="31">
    <location>
        <begin position="453"/>
        <end position="457"/>
    </location>
</feature>
<feature type="turn" evidence="31">
    <location>
        <begin position="462"/>
        <end position="464"/>
    </location>
</feature>
<feature type="helix" evidence="31">
    <location>
        <begin position="468"/>
        <end position="470"/>
    </location>
</feature>
<feature type="helix" evidence="31">
    <location>
        <begin position="476"/>
        <end position="478"/>
    </location>
</feature>
<feature type="strand" evidence="31">
    <location>
        <begin position="482"/>
        <end position="484"/>
    </location>
</feature>
<feature type="helix" evidence="31">
    <location>
        <begin position="485"/>
        <end position="499"/>
    </location>
</feature>
<feature type="helix" evidence="31">
    <location>
        <begin position="507"/>
        <end position="512"/>
    </location>
</feature>
<feature type="strand" evidence="31">
    <location>
        <begin position="518"/>
        <end position="520"/>
    </location>
</feature>
<feature type="helix" evidence="31">
    <location>
        <begin position="525"/>
        <end position="533"/>
    </location>
</feature>
<feature type="helix" evidence="31">
    <location>
        <begin position="544"/>
        <end position="546"/>
    </location>
</feature>
<keyword id="KW-0002">3D-structure</keyword>
<keyword id="KW-0963">Cytoplasm</keyword>
<keyword id="KW-0903">Direct protein sequencing</keyword>
<keyword id="KW-0479">Metal-binding</keyword>
<keyword id="KW-0484">Methanogenesis</keyword>
<keyword id="KW-0488">Methylation</keyword>
<keyword id="KW-0533">Nickel</keyword>
<keyword id="KW-0808">Transferase</keyword>